<organism>
    <name type="scientific">Streptomyces kanamyceticus</name>
    <dbReference type="NCBI Taxonomy" id="1967"/>
    <lineage>
        <taxon>Bacteria</taxon>
        <taxon>Bacillati</taxon>
        <taxon>Actinomycetota</taxon>
        <taxon>Actinomycetes</taxon>
        <taxon>Kitasatosporales</taxon>
        <taxon>Streptomycetaceae</taxon>
        <taxon>Streptomyces</taxon>
    </lineage>
</organism>
<dbReference type="EC" id="4.2.3.124"/>
<dbReference type="EMBL" id="AJ582817">
    <property type="protein sequence ID" value="CAE46939.1"/>
    <property type="molecule type" value="Genomic_DNA"/>
</dbReference>
<dbReference type="EMBL" id="AB164642">
    <property type="protein sequence ID" value="BAD20759.1"/>
    <property type="molecule type" value="Genomic_DNA"/>
</dbReference>
<dbReference type="EMBL" id="AJ628422">
    <property type="protein sequence ID" value="CAF31589.1"/>
    <property type="molecule type" value="Genomic_DNA"/>
</dbReference>
<dbReference type="RefSeq" id="WP_055553819.1">
    <property type="nucleotide sequence ID" value="NZ_CP023699.1"/>
</dbReference>
<dbReference type="SMR" id="Q6L738"/>
<dbReference type="KEGG" id="ag:CAE46939"/>
<dbReference type="OrthoDB" id="9806583at2"/>
<dbReference type="BioCyc" id="MetaCyc:MONOMER-17187"/>
<dbReference type="UniPathway" id="UPA00907">
    <property type="reaction ID" value="UER00921"/>
</dbReference>
<dbReference type="UniPathway" id="UPA00965"/>
<dbReference type="GO" id="GO:0003856">
    <property type="term" value="F:3-dehydroquinate synthase activity"/>
    <property type="evidence" value="ECO:0007669"/>
    <property type="project" value="TreeGrafter"/>
</dbReference>
<dbReference type="GO" id="GO:0046872">
    <property type="term" value="F:metal ion binding"/>
    <property type="evidence" value="ECO:0007669"/>
    <property type="project" value="UniProtKB-KW"/>
</dbReference>
<dbReference type="GO" id="GO:0017000">
    <property type="term" value="P:antibiotic biosynthetic process"/>
    <property type="evidence" value="ECO:0007669"/>
    <property type="project" value="UniProtKB-KW"/>
</dbReference>
<dbReference type="GO" id="GO:0009073">
    <property type="term" value="P:aromatic amino acid family biosynthetic process"/>
    <property type="evidence" value="ECO:0007669"/>
    <property type="project" value="InterPro"/>
</dbReference>
<dbReference type="CDD" id="cd08197">
    <property type="entry name" value="DOIS"/>
    <property type="match status" value="1"/>
</dbReference>
<dbReference type="Gene3D" id="3.40.50.1970">
    <property type="match status" value="1"/>
</dbReference>
<dbReference type="Gene3D" id="1.20.1090.10">
    <property type="entry name" value="Dehydroquinate synthase-like - alpha domain"/>
    <property type="match status" value="1"/>
</dbReference>
<dbReference type="InterPro" id="IPR050071">
    <property type="entry name" value="Dehydroquinate_synthase"/>
</dbReference>
<dbReference type="InterPro" id="IPR030963">
    <property type="entry name" value="DHQ_synth_fam"/>
</dbReference>
<dbReference type="InterPro" id="IPR030960">
    <property type="entry name" value="DHQS/DOIS_N"/>
</dbReference>
<dbReference type="InterPro" id="IPR056179">
    <property type="entry name" value="DHQS_C"/>
</dbReference>
<dbReference type="PANTHER" id="PTHR43622">
    <property type="entry name" value="3-DEHYDROQUINATE SYNTHASE"/>
    <property type="match status" value="1"/>
</dbReference>
<dbReference type="PANTHER" id="PTHR43622:SF1">
    <property type="entry name" value="3-DEHYDROQUINATE SYNTHASE"/>
    <property type="match status" value="1"/>
</dbReference>
<dbReference type="Pfam" id="PF01761">
    <property type="entry name" value="DHQ_synthase"/>
    <property type="match status" value="1"/>
</dbReference>
<dbReference type="Pfam" id="PF24621">
    <property type="entry name" value="DHQS_C"/>
    <property type="match status" value="1"/>
</dbReference>
<dbReference type="PIRSF" id="PIRSF001455">
    <property type="entry name" value="DHQ_synth"/>
    <property type="match status" value="1"/>
</dbReference>
<dbReference type="SUPFAM" id="SSF56796">
    <property type="entry name" value="Dehydroquinate synthase-like"/>
    <property type="match status" value="1"/>
</dbReference>
<protein>
    <recommendedName>
        <fullName>2-deoxy-scyllo-inosose synthase</fullName>
        <shortName>DOI synthase</shortName>
        <shortName>DOIS</shortName>
        <ecNumber>4.2.3.124</ecNumber>
    </recommendedName>
</protein>
<sequence>MQVTTITMDDVQYPYRLGTDCLDGIVTRLGELGASRYLIVSDPRVAELYGQGLRERLAEQAGPAELITHASGEQNKGLPALHDLAEEALRRGADRQSIVVALGGGVTGNIAGLLAALLFRGIRLVHVPTTVVAMLDSVLSLKQAVNAGVGKNLVGTFYQPVEVLADTAMLRTLPVREVRSGMCEVVKNSLAIRPSMIDQLSAGLRPDGRYPDDTMHWIIYESLAAKAQVTAYDKYERGEGLILEYGHTVGHAVEHSSQGAVPHGAAVALGMIAAAQVSHRAGWASAELVDLHRELVAKTGVARRIPSDIPLSAVRHRLSFDNKRGYLPASADTYPMVLLESPGKVLRSEGTVLTAAPRDLVDAVVDELAEPPRPAAARTDDAATVLGGAG</sequence>
<reference key="1">
    <citation type="journal article" date="2004" name="Arch. Biochem. Biophys.">
        <title>A gene cluster for biosynthesis of kanamycin from Streptomyces kanamyceticus: comparison with gentamicin biosynthetic gene cluster.</title>
        <authorList>
            <person name="Kharel M.K."/>
            <person name="Subba B."/>
            <person name="Basnet D.B."/>
            <person name="Woo J.S."/>
            <person name="Lee H.C."/>
            <person name="Liou K."/>
            <person name="Sohng J.K."/>
        </authorList>
    </citation>
    <scope>NUCLEOTIDE SEQUENCE [GENOMIC DNA]</scope>
    <scope>FUNCTION</scope>
    <source>
        <strain>ATCC 12853 / DSM 40500 / NBRC 13414 / NCIMB 9343 / NRRL B-2535 / VKM Ac-837</strain>
    </source>
</reference>
<reference key="2">
    <citation type="journal article" date="2004" name="J. Antibiot.">
        <title>The kanamycin biosynthetic gene cluster from Streptomyces kanamyceticus.</title>
        <authorList>
            <person name="Yanai K."/>
            <person name="Murakami T."/>
        </authorList>
    </citation>
    <scope>NUCLEOTIDE SEQUENCE [GENOMIC DNA]</scope>
    <source>
        <strain>21-18</strain>
    </source>
</reference>
<reference key="3">
    <citation type="submission" date="2004-02" db="EMBL/GenBank/DDBJ databases">
        <title>Cloning and sequencing of the kanamycin biosynthetic gene cluster from Streptomyces kanamyceticus DSM 40500.</title>
        <authorList>
            <person name="Aboshanab K.M.A."/>
            <person name="Schmidt-Beissner H."/>
            <person name="Wehmeier U.F."/>
            <person name="Welzel K."/>
            <person name="Vente A."/>
            <person name="Piepersberg W."/>
        </authorList>
    </citation>
    <scope>NUCLEOTIDE SEQUENCE [GENOMIC DNA]</scope>
    <source>
        <strain>ATCC 12853 / DSM 40500 / NBRC 13414 / NCIMB 9343 / NRRL B-2535 / VKM Ac-837</strain>
    </source>
</reference>
<feature type="chain" id="PRO_0000234037" description="2-deoxy-scyllo-inosose synthase">
    <location>
        <begin position="1"/>
        <end position="390"/>
    </location>
</feature>
<feature type="region of interest" description="Disordered" evidence="2">
    <location>
        <begin position="371"/>
        <end position="390"/>
    </location>
</feature>
<feature type="active site" evidence="1">
    <location>
        <position position="142"/>
    </location>
</feature>
<feature type="active site" evidence="1">
    <location>
        <position position="244"/>
    </location>
</feature>
<feature type="binding site" evidence="1">
    <location>
        <position position="42"/>
    </location>
    <ligand>
        <name>NAD(+)</name>
        <dbReference type="ChEBI" id="CHEBI:57540"/>
    </ligand>
</feature>
<feature type="binding site" evidence="1">
    <location>
        <begin position="73"/>
        <end position="76"/>
    </location>
    <ligand>
        <name>NAD(+)</name>
        <dbReference type="ChEBI" id="CHEBI:57540"/>
    </ligand>
</feature>
<feature type="binding site" evidence="1">
    <location>
        <begin position="105"/>
        <end position="109"/>
    </location>
    <ligand>
        <name>NAD(+)</name>
        <dbReference type="ChEBI" id="CHEBI:57540"/>
    </ligand>
</feature>
<feature type="binding site" evidence="1">
    <location>
        <begin position="129"/>
        <end position="130"/>
    </location>
    <ligand>
        <name>NAD(+)</name>
        <dbReference type="ChEBI" id="CHEBI:57540"/>
    </ligand>
</feature>
<feature type="binding site" evidence="1">
    <location>
        <begin position="140"/>
        <end position="142"/>
    </location>
    <ligand>
        <name>NAD(+)</name>
        <dbReference type="ChEBI" id="CHEBI:57540"/>
    </ligand>
</feature>
<feature type="binding site" evidence="1">
    <location>
        <begin position="151"/>
        <end position="152"/>
    </location>
    <ligand>
        <name>NAD(+)</name>
        <dbReference type="ChEBI" id="CHEBI:57540"/>
    </ligand>
</feature>
<feature type="binding site" evidence="1">
    <location>
        <position position="184"/>
    </location>
    <ligand>
        <name>Co(2+)</name>
        <dbReference type="ChEBI" id="CHEBI:48828"/>
    </ligand>
</feature>
<feature type="binding site" evidence="1">
    <location>
        <position position="247"/>
    </location>
    <ligand>
        <name>Co(2+)</name>
        <dbReference type="ChEBI" id="CHEBI:48828"/>
    </ligand>
</feature>
<feature type="binding site" evidence="1">
    <location>
        <position position="263"/>
    </location>
    <ligand>
        <name>Co(2+)</name>
        <dbReference type="ChEBI" id="CHEBI:48828"/>
    </ligand>
</feature>
<keyword id="KW-0045">Antibiotic biosynthesis</keyword>
<keyword id="KW-0170">Cobalt</keyword>
<keyword id="KW-0456">Lyase</keyword>
<keyword id="KW-0479">Metal-binding</keyword>
<keyword id="KW-0520">NAD</keyword>
<comment type="function">
    <text evidence="3">Catalyzes the intramolecular carbocycle formation from D-glucose-6-phosphate to 2-deoxy-scyllo-inosose (DOI).</text>
</comment>
<comment type="catalytic activity">
    <reaction>
        <text>D-glucose 6-phosphate = 2-deoxy-L-scyllo-inosose + phosphate</text>
        <dbReference type="Rhea" id="RHEA:33071"/>
        <dbReference type="ChEBI" id="CHEBI:43474"/>
        <dbReference type="ChEBI" id="CHEBI:61548"/>
        <dbReference type="ChEBI" id="CHEBI:64796"/>
        <dbReference type="EC" id="4.2.3.124"/>
    </reaction>
</comment>
<comment type="cofactor">
    <cofactor evidence="1">
        <name>NAD(+)</name>
        <dbReference type="ChEBI" id="CHEBI:57540"/>
    </cofactor>
</comment>
<comment type="cofactor">
    <cofactor evidence="1">
        <name>Co(2+)</name>
        <dbReference type="ChEBI" id="CHEBI:48828"/>
    </cofactor>
    <text evidence="1">Binds 1 Co(2+) ion per subunit.</text>
</comment>
<comment type="biophysicochemical properties">
    <temperatureDependence>
        <text>Optimum temperature is 42 degrees Celsius.</text>
    </temperatureDependence>
</comment>
<comment type="pathway">
    <text>Metabolic intermediate biosynthesis; 2-deoxystreptamine biosynthesis; 2-deoxystreptamine from D-glucose 6-phosphate: step 1/4.</text>
</comment>
<comment type="pathway">
    <text>Antibiotic biosynthesis; kanamycin biosynthesis.</text>
</comment>
<comment type="similarity">
    <text evidence="4">Belongs to the sugar phosphate cyclases superfamily. DOI synthase family.</text>
</comment>
<accession>Q6L738</accession>
<proteinExistence type="evidence at protein level"/>
<name>DOIS_STRKN</name>
<evidence type="ECO:0000250" key="1">
    <source>
        <dbReference type="UniProtKB" id="Q9S5E2"/>
    </source>
</evidence>
<evidence type="ECO:0000256" key="2">
    <source>
        <dbReference type="SAM" id="MobiDB-lite"/>
    </source>
</evidence>
<evidence type="ECO:0000269" key="3">
    <source>
    </source>
</evidence>
<evidence type="ECO:0000305" key="4"/>
<gene>
    <name type="primary">kanC</name>
    <name type="synonym">kanA</name>
</gene>